<feature type="chain" id="PRO_1000094013" description="4-hydroxy-tetrahydrodipicolinate reductase">
    <location>
        <begin position="1"/>
        <end position="255"/>
    </location>
</feature>
<feature type="active site" description="Proton donor/acceptor" evidence="1">
    <location>
        <position position="145"/>
    </location>
</feature>
<feature type="active site" description="Proton donor" evidence="1">
    <location>
        <position position="149"/>
    </location>
</feature>
<feature type="binding site" evidence="1">
    <location>
        <begin position="9"/>
        <end position="14"/>
    </location>
    <ligand>
        <name>NAD(+)</name>
        <dbReference type="ChEBI" id="CHEBI:57540"/>
    </ligand>
</feature>
<feature type="binding site" evidence="1">
    <location>
        <position position="35"/>
    </location>
    <ligand>
        <name>NAD(+)</name>
        <dbReference type="ChEBI" id="CHEBI:57540"/>
    </ligand>
</feature>
<feature type="binding site" evidence="1">
    <location>
        <begin position="89"/>
        <end position="91"/>
    </location>
    <ligand>
        <name>NAD(+)</name>
        <dbReference type="ChEBI" id="CHEBI:57540"/>
    </ligand>
</feature>
<feature type="binding site" evidence="1">
    <location>
        <begin position="115"/>
        <end position="118"/>
    </location>
    <ligand>
        <name>NAD(+)</name>
        <dbReference type="ChEBI" id="CHEBI:57540"/>
    </ligand>
</feature>
<feature type="binding site" evidence="1">
    <location>
        <position position="146"/>
    </location>
    <ligand>
        <name>(S)-2,3,4,5-tetrahydrodipicolinate</name>
        <dbReference type="ChEBI" id="CHEBI:16845"/>
    </ligand>
</feature>
<feature type="binding site" evidence="1">
    <location>
        <begin position="155"/>
        <end position="156"/>
    </location>
    <ligand>
        <name>(S)-2,3,4,5-tetrahydrodipicolinate</name>
        <dbReference type="ChEBI" id="CHEBI:16845"/>
    </ligand>
</feature>
<comment type="function">
    <text evidence="1">Catalyzes the conversion of 4-hydroxy-tetrahydrodipicolinate (HTPA) to tetrahydrodipicolinate.</text>
</comment>
<comment type="catalytic activity">
    <reaction evidence="1">
        <text>(S)-2,3,4,5-tetrahydrodipicolinate + NAD(+) + H2O = (2S,4S)-4-hydroxy-2,3,4,5-tetrahydrodipicolinate + NADH + H(+)</text>
        <dbReference type="Rhea" id="RHEA:35323"/>
        <dbReference type="ChEBI" id="CHEBI:15377"/>
        <dbReference type="ChEBI" id="CHEBI:15378"/>
        <dbReference type="ChEBI" id="CHEBI:16845"/>
        <dbReference type="ChEBI" id="CHEBI:57540"/>
        <dbReference type="ChEBI" id="CHEBI:57945"/>
        <dbReference type="ChEBI" id="CHEBI:67139"/>
        <dbReference type="EC" id="1.17.1.8"/>
    </reaction>
</comment>
<comment type="catalytic activity">
    <reaction evidence="1">
        <text>(S)-2,3,4,5-tetrahydrodipicolinate + NADP(+) + H2O = (2S,4S)-4-hydroxy-2,3,4,5-tetrahydrodipicolinate + NADPH + H(+)</text>
        <dbReference type="Rhea" id="RHEA:35331"/>
        <dbReference type="ChEBI" id="CHEBI:15377"/>
        <dbReference type="ChEBI" id="CHEBI:15378"/>
        <dbReference type="ChEBI" id="CHEBI:16845"/>
        <dbReference type="ChEBI" id="CHEBI:57783"/>
        <dbReference type="ChEBI" id="CHEBI:58349"/>
        <dbReference type="ChEBI" id="CHEBI:67139"/>
        <dbReference type="EC" id="1.17.1.8"/>
    </reaction>
</comment>
<comment type="pathway">
    <text evidence="1">Amino-acid biosynthesis; L-lysine biosynthesis via DAP pathway; (S)-tetrahydrodipicolinate from L-aspartate: step 4/4.</text>
</comment>
<comment type="subcellular location">
    <subcellularLocation>
        <location evidence="1">Cytoplasm</location>
    </subcellularLocation>
</comment>
<comment type="similarity">
    <text evidence="1">Belongs to the DapB family.</text>
</comment>
<comment type="caution">
    <text evidence="2">Was originally thought to be a dihydrodipicolinate reductase (DHDPR), catalyzing the conversion of dihydrodipicolinate to tetrahydrodipicolinate. However, it was shown in E.coli that the substrate of the enzymatic reaction is not dihydrodipicolinate (DHDP) but in fact (2S,4S)-4-hydroxy-2,3,4,5-tetrahydrodipicolinic acid (HTPA), the product released by the DapA-catalyzed reaction.</text>
</comment>
<keyword id="KW-0028">Amino-acid biosynthesis</keyword>
<keyword id="KW-0963">Cytoplasm</keyword>
<keyword id="KW-0220">Diaminopimelate biosynthesis</keyword>
<keyword id="KW-0457">Lysine biosynthesis</keyword>
<keyword id="KW-0520">NAD</keyword>
<keyword id="KW-0521">NADP</keyword>
<keyword id="KW-0560">Oxidoreductase</keyword>
<evidence type="ECO:0000255" key="1">
    <source>
        <dbReference type="HAMAP-Rule" id="MF_00102"/>
    </source>
</evidence>
<evidence type="ECO:0000305" key="2"/>
<proteinExistence type="inferred from homology"/>
<gene>
    <name evidence="1" type="primary">dapB</name>
    <name type="ordered locus">SPH_1671</name>
</gene>
<dbReference type="EC" id="1.17.1.8" evidence="1"/>
<dbReference type="EMBL" id="CP000936">
    <property type="protein sequence ID" value="ACA37320.1"/>
    <property type="molecule type" value="Genomic_DNA"/>
</dbReference>
<dbReference type="RefSeq" id="WP_000027904.1">
    <property type="nucleotide sequence ID" value="NC_010380.1"/>
</dbReference>
<dbReference type="SMR" id="B1ICX7"/>
<dbReference type="KEGG" id="spv:SPH_1671"/>
<dbReference type="HOGENOM" id="CLU_047479_0_1_9"/>
<dbReference type="UniPathway" id="UPA00034">
    <property type="reaction ID" value="UER00018"/>
</dbReference>
<dbReference type="Proteomes" id="UP000002163">
    <property type="component" value="Chromosome"/>
</dbReference>
<dbReference type="GO" id="GO:0005829">
    <property type="term" value="C:cytosol"/>
    <property type="evidence" value="ECO:0007669"/>
    <property type="project" value="TreeGrafter"/>
</dbReference>
<dbReference type="GO" id="GO:0008839">
    <property type="term" value="F:4-hydroxy-tetrahydrodipicolinate reductase"/>
    <property type="evidence" value="ECO:0007669"/>
    <property type="project" value="UniProtKB-EC"/>
</dbReference>
<dbReference type="GO" id="GO:0051287">
    <property type="term" value="F:NAD binding"/>
    <property type="evidence" value="ECO:0007669"/>
    <property type="project" value="UniProtKB-UniRule"/>
</dbReference>
<dbReference type="GO" id="GO:0050661">
    <property type="term" value="F:NADP binding"/>
    <property type="evidence" value="ECO:0007669"/>
    <property type="project" value="UniProtKB-UniRule"/>
</dbReference>
<dbReference type="GO" id="GO:0016726">
    <property type="term" value="F:oxidoreductase activity, acting on CH or CH2 groups, NAD or NADP as acceptor"/>
    <property type="evidence" value="ECO:0007669"/>
    <property type="project" value="UniProtKB-UniRule"/>
</dbReference>
<dbReference type="GO" id="GO:0019877">
    <property type="term" value="P:diaminopimelate biosynthetic process"/>
    <property type="evidence" value="ECO:0007669"/>
    <property type="project" value="UniProtKB-UniRule"/>
</dbReference>
<dbReference type="GO" id="GO:0009089">
    <property type="term" value="P:lysine biosynthetic process via diaminopimelate"/>
    <property type="evidence" value="ECO:0007669"/>
    <property type="project" value="UniProtKB-UniRule"/>
</dbReference>
<dbReference type="CDD" id="cd02274">
    <property type="entry name" value="DHDPR_N"/>
    <property type="match status" value="1"/>
</dbReference>
<dbReference type="FunFam" id="3.30.360.10:FF:000009">
    <property type="entry name" value="4-hydroxy-tetrahydrodipicolinate reductase"/>
    <property type="match status" value="1"/>
</dbReference>
<dbReference type="Gene3D" id="3.30.360.10">
    <property type="entry name" value="Dihydrodipicolinate Reductase, domain 2"/>
    <property type="match status" value="1"/>
</dbReference>
<dbReference type="Gene3D" id="3.40.50.720">
    <property type="entry name" value="NAD(P)-binding Rossmann-like Domain"/>
    <property type="match status" value="1"/>
</dbReference>
<dbReference type="HAMAP" id="MF_00102">
    <property type="entry name" value="DapB"/>
    <property type="match status" value="1"/>
</dbReference>
<dbReference type="InterPro" id="IPR022663">
    <property type="entry name" value="DapB_C"/>
</dbReference>
<dbReference type="InterPro" id="IPR000846">
    <property type="entry name" value="DapB_N"/>
</dbReference>
<dbReference type="InterPro" id="IPR022664">
    <property type="entry name" value="DapB_N_CS"/>
</dbReference>
<dbReference type="InterPro" id="IPR023940">
    <property type="entry name" value="DHDPR_bac"/>
</dbReference>
<dbReference type="InterPro" id="IPR036291">
    <property type="entry name" value="NAD(P)-bd_dom_sf"/>
</dbReference>
<dbReference type="NCBIfam" id="TIGR00036">
    <property type="entry name" value="dapB"/>
    <property type="match status" value="1"/>
</dbReference>
<dbReference type="PANTHER" id="PTHR20836:SF0">
    <property type="entry name" value="4-HYDROXY-TETRAHYDRODIPICOLINATE REDUCTASE 1, CHLOROPLASTIC-RELATED"/>
    <property type="match status" value="1"/>
</dbReference>
<dbReference type="PANTHER" id="PTHR20836">
    <property type="entry name" value="DIHYDRODIPICOLINATE REDUCTASE"/>
    <property type="match status" value="1"/>
</dbReference>
<dbReference type="Pfam" id="PF05173">
    <property type="entry name" value="DapB_C"/>
    <property type="match status" value="1"/>
</dbReference>
<dbReference type="Pfam" id="PF01113">
    <property type="entry name" value="DapB_N"/>
    <property type="match status" value="1"/>
</dbReference>
<dbReference type="PIRSF" id="PIRSF000161">
    <property type="entry name" value="DHPR"/>
    <property type="match status" value="1"/>
</dbReference>
<dbReference type="SUPFAM" id="SSF55347">
    <property type="entry name" value="Glyceraldehyde-3-phosphate dehydrogenase-like, C-terminal domain"/>
    <property type="match status" value="1"/>
</dbReference>
<dbReference type="SUPFAM" id="SSF51735">
    <property type="entry name" value="NAD(P)-binding Rossmann-fold domains"/>
    <property type="match status" value="1"/>
</dbReference>
<dbReference type="PROSITE" id="PS01298">
    <property type="entry name" value="DAPB"/>
    <property type="match status" value="1"/>
</dbReference>
<organism>
    <name type="scientific">Streptococcus pneumoniae (strain Hungary19A-6)</name>
    <dbReference type="NCBI Taxonomy" id="487214"/>
    <lineage>
        <taxon>Bacteria</taxon>
        <taxon>Bacillati</taxon>
        <taxon>Bacillota</taxon>
        <taxon>Bacilli</taxon>
        <taxon>Lactobacillales</taxon>
        <taxon>Streptococcaceae</taxon>
        <taxon>Streptococcus</taxon>
    </lineage>
</organism>
<protein>
    <recommendedName>
        <fullName evidence="1">4-hydroxy-tetrahydrodipicolinate reductase</fullName>
        <shortName evidence="1">HTPA reductase</shortName>
        <ecNumber evidence="1">1.17.1.8</ecNumber>
    </recommendedName>
</protein>
<name>DAPB_STRPI</name>
<accession>B1ICX7</accession>
<sequence>MSIRVIIAGFKGKMGQAACQMVLTDSDLDLVAVLDPFESESEWQGIPVFKDKADLAGFEADVWVDFTTPAVAYENTRFALENGFAPVVGTTGFTSEEIAELKEFSRAQDLGGLIAPNFALGAVLLMQFATQAAKYFPNVEIIELHHDKKKDAPSGTAIKTAELMAEVRESIQQGAADEEELIAGARGADFDGMRIHSVRLPGLVAHQEVIFGNQGEGLTLRHDSYDRISFMTGVNLGIKEVVKRHELVYGLEHLL</sequence>
<reference key="1">
    <citation type="journal article" date="2010" name="Genome Biol.">
        <title>Structure and dynamics of the pan-genome of Streptococcus pneumoniae and closely related species.</title>
        <authorList>
            <person name="Donati C."/>
            <person name="Hiller N.L."/>
            <person name="Tettelin H."/>
            <person name="Muzzi A."/>
            <person name="Croucher N.J."/>
            <person name="Angiuoli S.V."/>
            <person name="Oggioni M."/>
            <person name="Dunning Hotopp J.C."/>
            <person name="Hu F.Z."/>
            <person name="Riley D.R."/>
            <person name="Covacci A."/>
            <person name="Mitchell T.J."/>
            <person name="Bentley S.D."/>
            <person name="Kilian M."/>
            <person name="Ehrlich G.D."/>
            <person name="Rappuoli R."/>
            <person name="Moxon E.R."/>
            <person name="Masignani V."/>
        </authorList>
    </citation>
    <scope>NUCLEOTIDE SEQUENCE [LARGE SCALE GENOMIC DNA]</scope>
    <source>
        <strain>Hungary19A-6</strain>
    </source>
</reference>